<protein>
    <recommendedName>
        <fullName evidence="1">Aspartate 1-decarboxylase</fullName>
        <ecNumber evidence="1">4.1.1.11</ecNumber>
    </recommendedName>
    <alternativeName>
        <fullName evidence="1">Aspartate alpha-decarboxylase</fullName>
    </alternativeName>
    <component>
        <recommendedName>
            <fullName evidence="1">Aspartate 1-decarboxylase beta chain</fullName>
        </recommendedName>
    </component>
    <component>
        <recommendedName>
            <fullName evidence="1">Aspartate 1-decarboxylase alpha chain</fullName>
        </recommendedName>
    </component>
</protein>
<gene>
    <name evidence="1" type="primary">panD</name>
    <name type="ordered locus">PERMA_1512</name>
</gene>
<dbReference type="EC" id="4.1.1.11" evidence="1"/>
<dbReference type="EMBL" id="CP001230">
    <property type="protein sequence ID" value="ACO04539.1"/>
    <property type="molecule type" value="Genomic_DNA"/>
</dbReference>
<dbReference type="RefSeq" id="WP_012676776.1">
    <property type="nucleotide sequence ID" value="NC_012440.1"/>
</dbReference>
<dbReference type="SMR" id="C0QRI3"/>
<dbReference type="STRING" id="123214.PERMA_1512"/>
<dbReference type="PaxDb" id="123214-PERMA_1512"/>
<dbReference type="KEGG" id="pmx:PERMA_1512"/>
<dbReference type="eggNOG" id="COG0853">
    <property type="taxonomic scope" value="Bacteria"/>
</dbReference>
<dbReference type="HOGENOM" id="CLU_115305_2_0_0"/>
<dbReference type="OrthoDB" id="9803983at2"/>
<dbReference type="UniPathway" id="UPA00028">
    <property type="reaction ID" value="UER00002"/>
</dbReference>
<dbReference type="Proteomes" id="UP000001366">
    <property type="component" value="Chromosome"/>
</dbReference>
<dbReference type="GO" id="GO:0005829">
    <property type="term" value="C:cytosol"/>
    <property type="evidence" value="ECO:0007669"/>
    <property type="project" value="TreeGrafter"/>
</dbReference>
<dbReference type="GO" id="GO:0004068">
    <property type="term" value="F:aspartate 1-decarboxylase activity"/>
    <property type="evidence" value="ECO:0007669"/>
    <property type="project" value="UniProtKB-UniRule"/>
</dbReference>
<dbReference type="GO" id="GO:0006523">
    <property type="term" value="P:alanine biosynthetic process"/>
    <property type="evidence" value="ECO:0007669"/>
    <property type="project" value="InterPro"/>
</dbReference>
<dbReference type="GO" id="GO:0015940">
    <property type="term" value="P:pantothenate biosynthetic process"/>
    <property type="evidence" value="ECO:0007669"/>
    <property type="project" value="UniProtKB-UniRule"/>
</dbReference>
<dbReference type="CDD" id="cd06919">
    <property type="entry name" value="Asp_decarbox"/>
    <property type="match status" value="1"/>
</dbReference>
<dbReference type="Gene3D" id="2.40.40.20">
    <property type="match status" value="1"/>
</dbReference>
<dbReference type="HAMAP" id="MF_00446">
    <property type="entry name" value="PanD"/>
    <property type="match status" value="1"/>
</dbReference>
<dbReference type="InterPro" id="IPR009010">
    <property type="entry name" value="Asp_de-COase-like_dom_sf"/>
</dbReference>
<dbReference type="InterPro" id="IPR003190">
    <property type="entry name" value="Asp_decarbox"/>
</dbReference>
<dbReference type="NCBIfam" id="TIGR00223">
    <property type="entry name" value="panD"/>
    <property type="match status" value="1"/>
</dbReference>
<dbReference type="PANTHER" id="PTHR21012">
    <property type="entry name" value="ASPARTATE 1-DECARBOXYLASE"/>
    <property type="match status" value="1"/>
</dbReference>
<dbReference type="PANTHER" id="PTHR21012:SF0">
    <property type="entry name" value="ASPARTATE 1-DECARBOXYLASE"/>
    <property type="match status" value="1"/>
</dbReference>
<dbReference type="Pfam" id="PF02261">
    <property type="entry name" value="Asp_decarbox"/>
    <property type="match status" value="1"/>
</dbReference>
<dbReference type="PIRSF" id="PIRSF006246">
    <property type="entry name" value="Asp_decarbox"/>
    <property type="match status" value="1"/>
</dbReference>
<dbReference type="SUPFAM" id="SSF50692">
    <property type="entry name" value="ADC-like"/>
    <property type="match status" value="1"/>
</dbReference>
<accession>C0QRI3</accession>
<organism>
    <name type="scientific">Persephonella marina (strain DSM 14350 / EX-H1)</name>
    <dbReference type="NCBI Taxonomy" id="123214"/>
    <lineage>
        <taxon>Bacteria</taxon>
        <taxon>Pseudomonadati</taxon>
        <taxon>Aquificota</taxon>
        <taxon>Aquificia</taxon>
        <taxon>Aquificales</taxon>
        <taxon>Hydrogenothermaceae</taxon>
        <taxon>Persephonella</taxon>
    </lineage>
</organism>
<evidence type="ECO:0000255" key="1">
    <source>
        <dbReference type="HAMAP-Rule" id="MF_00446"/>
    </source>
</evidence>
<feature type="chain" id="PRO_1000135224" description="Aspartate 1-decarboxylase beta chain" evidence="1">
    <location>
        <begin position="1"/>
        <end position="24"/>
    </location>
</feature>
<feature type="chain" id="PRO_1000135225" description="Aspartate 1-decarboxylase alpha chain" evidence="1">
    <location>
        <begin position="25"/>
        <end position="140"/>
    </location>
</feature>
<feature type="active site" description="Schiff-base intermediate with substrate; via pyruvic acid" evidence="1">
    <location>
        <position position="25"/>
    </location>
</feature>
<feature type="active site" description="Proton donor" evidence="1">
    <location>
        <position position="58"/>
    </location>
</feature>
<feature type="binding site" evidence="1">
    <location>
        <position position="57"/>
    </location>
    <ligand>
        <name>substrate</name>
    </ligand>
</feature>
<feature type="binding site" evidence="1">
    <location>
        <begin position="73"/>
        <end position="75"/>
    </location>
    <ligand>
        <name>substrate</name>
    </ligand>
</feature>
<feature type="modified residue" description="Pyruvic acid (Ser)" evidence="1">
    <location>
        <position position="25"/>
    </location>
</feature>
<sequence length="140" mass="15944">MRRTILKSKIHRITITGADLHYEGSLTLDEAIMEAANLVPFEKIEIYNVNNGHRFSTYVIPGQRYGGECILNGAAARLGHAGDIIIIVSWADLDEEELKNFKVNLVYMDEENNIKEHKVTTVFSEEVKEIAERNKNLVRD</sequence>
<proteinExistence type="inferred from homology"/>
<comment type="function">
    <text evidence="1">Catalyzes the pyruvoyl-dependent decarboxylation of aspartate to produce beta-alanine.</text>
</comment>
<comment type="catalytic activity">
    <reaction evidence="1">
        <text>L-aspartate + H(+) = beta-alanine + CO2</text>
        <dbReference type="Rhea" id="RHEA:19497"/>
        <dbReference type="ChEBI" id="CHEBI:15378"/>
        <dbReference type="ChEBI" id="CHEBI:16526"/>
        <dbReference type="ChEBI" id="CHEBI:29991"/>
        <dbReference type="ChEBI" id="CHEBI:57966"/>
        <dbReference type="EC" id="4.1.1.11"/>
    </reaction>
</comment>
<comment type="cofactor">
    <cofactor evidence="1">
        <name>pyruvate</name>
        <dbReference type="ChEBI" id="CHEBI:15361"/>
    </cofactor>
    <text evidence="1">Binds 1 pyruvoyl group covalently per subunit.</text>
</comment>
<comment type="pathway">
    <text evidence="1">Cofactor biosynthesis; (R)-pantothenate biosynthesis; beta-alanine from L-aspartate: step 1/1.</text>
</comment>
<comment type="subunit">
    <text evidence="1">Heterooctamer of four alpha and four beta subunits.</text>
</comment>
<comment type="subcellular location">
    <subcellularLocation>
        <location evidence="1">Cytoplasm</location>
    </subcellularLocation>
</comment>
<comment type="PTM">
    <text evidence="1">Is synthesized initially as an inactive proenzyme, which is activated by self-cleavage at a specific serine bond to produce a beta-subunit with a hydroxyl group at its C-terminus and an alpha-subunit with a pyruvoyl group at its N-terminus.</text>
</comment>
<comment type="similarity">
    <text evidence="1">Belongs to the PanD family.</text>
</comment>
<keyword id="KW-0068">Autocatalytic cleavage</keyword>
<keyword id="KW-0963">Cytoplasm</keyword>
<keyword id="KW-0210">Decarboxylase</keyword>
<keyword id="KW-0456">Lyase</keyword>
<keyword id="KW-0566">Pantothenate biosynthesis</keyword>
<keyword id="KW-0670">Pyruvate</keyword>
<keyword id="KW-1185">Reference proteome</keyword>
<keyword id="KW-0704">Schiff base</keyword>
<keyword id="KW-0865">Zymogen</keyword>
<reference key="1">
    <citation type="journal article" date="2009" name="J. Bacteriol.">
        <title>Complete and draft genome sequences of six members of the Aquificales.</title>
        <authorList>
            <person name="Reysenbach A.-L."/>
            <person name="Hamamura N."/>
            <person name="Podar M."/>
            <person name="Griffiths E."/>
            <person name="Ferreira S."/>
            <person name="Hochstein R."/>
            <person name="Heidelberg J."/>
            <person name="Johnson J."/>
            <person name="Mead D."/>
            <person name="Pohorille A."/>
            <person name="Sarmiento M."/>
            <person name="Schweighofer K."/>
            <person name="Seshadri R."/>
            <person name="Voytek M.A."/>
        </authorList>
    </citation>
    <scope>NUCLEOTIDE SEQUENCE [LARGE SCALE GENOMIC DNA]</scope>
    <source>
        <strain>DSM 14350 / EX-H1</strain>
    </source>
</reference>
<name>PAND_PERMH</name>